<comment type="function">
    <text evidence="1">E2 conjugating enzyme required for the cytoplasm to vacuole transport (Cvt) and autophagy. Required for selective autophagic degradation of the nucleus (nucleophagy) as well as for mitophagy which contributes to regulate mitochondrial quantity and quality by eliminating the mitochondria to a basal level to fulfill cellular energy requirements and preventing excess ROS production. Responsible for the E2-like covalent binding of phosphatidylethanolamine to the C-terminal Gly of ATG8. The ATG12-ATG5 conjugate plays a role of an E3 and promotes the transfer of ATG8 from ATG3 to phosphatidylethanolamine (PE). This step is required for the membrane association of ATG8. The formation of the ATG8-phosphatidylethanolamine conjugate is essential for autophagy and for the cytoplasm to vacuole transport (Cvt). The ATG8-PE conjugate mediates tethering between adjacent membranes and stimulates membrane hemifusion, leading to expansion of the autophagosomal membrane during autophagy (By similarity).</text>
</comment>
<comment type="subunit">
    <text evidence="1">Monomer. Interacts with ATG8 through an intermediate thioester bond through the C-terminal Gly of ATG8. Also interacts with the 40 amino acid C-terminal region of the E1-like ATG7 enzyme. Also interacts with the ATG12-ATG5 conjugate.</text>
</comment>
<comment type="subcellular location">
    <subcellularLocation>
        <location evidence="1">Cytoplasm</location>
    </subcellularLocation>
</comment>
<comment type="domain">
    <text evidence="1">The N-terminal region is involved in phosphatidylethanolamine-binding and is required for ATG8-PE conjugation.</text>
</comment>
<comment type="domain">
    <text evidence="1">The flexible region (FR) is required for ATG7-binding.</text>
</comment>
<comment type="domain">
    <text evidence="1">The handle region (HR) contains the ATG8 interaction motif (AIM) and mediates binding to ATG8. It is crucial for the cytoplasm-to-vacuole targeting pathway (By similarity).</text>
</comment>
<comment type="similarity">
    <text evidence="3">Belongs to the ATG3 family.</text>
</comment>
<dbReference type="EMBL" id="CR382126">
    <property type="protein sequence ID" value="CAG98078.1"/>
    <property type="molecule type" value="Genomic_DNA"/>
</dbReference>
<dbReference type="RefSeq" id="XP_455370.1">
    <property type="nucleotide sequence ID" value="XM_455370.1"/>
</dbReference>
<dbReference type="SMR" id="Q6CL19"/>
<dbReference type="FunCoup" id="Q6CL19">
    <property type="interactions" value="1123"/>
</dbReference>
<dbReference type="STRING" id="284590.Q6CL19"/>
<dbReference type="PaxDb" id="284590-Q6CL19"/>
<dbReference type="KEGG" id="kla:KLLA0_F06402g"/>
<dbReference type="eggNOG" id="KOG2981">
    <property type="taxonomic scope" value="Eukaryota"/>
</dbReference>
<dbReference type="HOGENOM" id="CLU_027518_2_0_1"/>
<dbReference type="InParanoid" id="Q6CL19"/>
<dbReference type="OMA" id="HCPTWSW"/>
<dbReference type="Proteomes" id="UP000000598">
    <property type="component" value="Chromosome F"/>
</dbReference>
<dbReference type="GO" id="GO:0005829">
    <property type="term" value="C:cytosol"/>
    <property type="evidence" value="ECO:0007669"/>
    <property type="project" value="TreeGrafter"/>
</dbReference>
<dbReference type="GO" id="GO:0000407">
    <property type="term" value="C:phagophore assembly site"/>
    <property type="evidence" value="ECO:0007669"/>
    <property type="project" value="TreeGrafter"/>
</dbReference>
<dbReference type="GO" id="GO:0019776">
    <property type="term" value="F:Atg8-family ligase activity"/>
    <property type="evidence" value="ECO:0007669"/>
    <property type="project" value="TreeGrafter"/>
</dbReference>
<dbReference type="GO" id="GO:0000045">
    <property type="term" value="P:autophagosome assembly"/>
    <property type="evidence" value="ECO:0007669"/>
    <property type="project" value="TreeGrafter"/>
</dbReference>
<dbReference type="GO" id="GO:0000422">
    <property type="term" value="P:autophagy of mitochondrion"/>
    <property type="evidence" value="ECO:0007669"/>
    <property type="project" value="TreeGrafter"/>
</dbReference>
<dbReference type="GO" id="GO:0061723">
    <property type="term" value="P:glycophagy"/>
    <property type="evidence" value="ECO:0007669"/>
    <property type="project" value="TreeGrafter"/>
</dbReference>
<dbReference type="GO" id="GO:0044804">
    <property type="term" value="P:nucleophagy"/>
    <property type="evidence" value="ECO:0007669"/>
    <property type="project" value="TreeGrafter"/>
</dbReference>
<dbReference type="GO" id="GO:0015031">
    <property type="term" value="P:protein transport"/>
    <property type="evidence" value="ECO:0007669"/>
    <property type="project" value="UniProtKB-KW"/>
</dbReference>
<dbReference type="Gene3D" id="3.30.1460.50">
    <property type="match status" value="1"/>
</dbReference>
<dbReference type="InterPro" id="IPR007135">
    <property type="entry name" value="Atg3/Atg10"/>
</dbReference>
<dbReference type="PANTHER" id="PTHR12866">
    <property type="entry name" value="UBIQUITIN-LIKE-CONJUGATING ENZYME ATG3"/>
    <property type="match status" value="1"/>
</dbReference>
<dbReference type="PANTHER" id="PTHR12866:SF2">
    <property type="entry name" value="UBIQUITIN-LIKE-CONJUGATING ENZYME ATG3"/>
    <property type="match status" value="1"/>
</dbReference>
<dbReference type="Pfam" id="PF03987">
    <property type="entry name" value="Autophagy_act_C"/>
    <property type="match status" value="1"/>
</dbReference>
<proteinExistence type="inferred from homology"/>
<reference key="1">
    <citation type="journal article" date="2004" name="Nature">
        <title>Genome evolution in yeasts.</title>
        <authorList>
            <person name="Dujon B."/>
            <person name="Sherman D."/>
            <person name="Fischer G."/>
            <person name="Durrens P."/>
            <person name="Casaregola S."/>
            <person name="Lafontaine I."/>
            <person name="de Montigny J."/>
            <person name="Marck C."/>
            <person name="Neuveglise C."/>
            <person name="Talla E."/>
            <person name="Goffard N."/>
            <person name="Frangeul L."/>
            <person name="Aigle M."/>
            <person name="Anthouard V."/>
            <person name="Babour A."/>
            <person name="Barbe V."/>
            <person name="Barnay S."/>
            <person name="Blanchin S."/>
            <person name="Beckerich J.-M."/>
            <person name="Beyne E."/>
            <person name="Bleykasten C."/>
            <person name="Boisrame A."/>
            <person name="Boyer J."/>
            <person name="Cattolico L."/>
            <person name="Confanioleri F."/>
            <person name="de Daruvar A."/>
            <person name="Despons L."/>
            <person name="Fabre E."/>
            <person name="Fairhead C."/>
            <person name="Ferry-Dumazet H."/>
            <person name="Groppi A."/>
            <person name="Hantraye F."/>
            <person name="Hennequin C."/>
            <person name="Jauniaux N."/>
            <person name="Joyet P."/>
            <person name="Kachouri R."/>
            <person name="Kerrest A."/>
            <person name="Koszul R."/>
            <person name="Lemaire M."/>
            <person name="Lesur I."/>
            <person name="Ma L."/>
            <person name="Muller H."/>
            <person name="Nicaud J.-M."/>
            <person name="Nikolski M."/>
            <person name="Oztas S."/>
            <person name="Ozier-Kalogeropoulos O."/>
            <person name="Pellenz S."/>
            <person name="Potier S."/>
            <person name="Richard G.-F."/>
            <person name="Straub M.-L."/>
            <person name="Suleau A."/>
            <person name="Swennen D."/>
            <person name="Tekaia F."/>
            <person name="Wesolowski-Louvel M."/>
            <person name="Westhof E."/>
            <person name="Wirth B."/>
            <person name="Zeniou-Meyer M."/>
            <person name="Zivanovic Y."/>
            <person name="Bolotin-Fukuhara M."/>
            <person name="Thierry A."/>
            <person name="Bouchier C."/>
            <person name="Caudron B."/>
            <person name="Scarpelli C."/>
            <person name="Gaillardin C."/>
            <person name="Weissenbach J."/>
            <person name="Wincker P."/>
            <person name="Souciet J.-L."/>
        </authorList>
    </citation>
    <scope>NUCLEOTIDE SEQUENCE [LARGE SCALE GENOMIC DNA]</scope>
    <source>
        <strain>ATCC 8585 / CBS 2359 / DSM 70799 / NBRC 1267 / NRRL Y-1140 / WM37</strain>
    </source>
</reference>
<gene>
    <name type="primary">ATG3</name>
    <name type="ordered locus">KLLA0F06402g</name>
</gene>
<accession>Q6CL19</accession>
<keyword id="KW-0072">Autophagy</keyword>
<keyword id="KW-0963">Cytoplasm</keyword>
<keyword id="KW-0653">Protein transport</keyword>
<keyword id="KW-1185">Reference proteome</keyword>
<keyword id="KW-0813">Transport</keyword>
<keyword id="KW-0833">Ubl conjugation pathway</keyword>
<name>ATG3_KLULA</name>
<feature type="chain" id="PRO_0000213581" description="Autophagy-related protein 3">
    <location>
        <begin position="1"/>
        <end position="302"/>
    </location>
</feature>
<feature type="region of interest" description="Flexible region" evidence="1">
    <location>
        <begin position="84"/>
        <end position="159"/>
    </location>
</feature>
<feature type="region of interest" description="Disordered" evidence="2">
    <location>
        <begin position="102"/>
        <end position="125"/>
    </location>
</feature>
<feature type="region of interest" description="Handle region" evidence="1">
    <location>
        <begin position="234"/>
        <end position="277"/>
    </location>
</feature>
<feature type="compositionally biased region" description="Basic and acidic residues" evidence="2">
    <location>
        <begin position="102"/>
        <end position="113"/>
    </location>
</feature>
<feature type="active site" description="Glycyl thioester intermediate" evidence="1">
    <location>
        <position position="230"/>
    </location>
</feature>
<protein>
    <recommendedName>
        <fullName>Autophagy-related protein 3</fullName>
    </recommendedName>
    <alternativeName>
        <fullName>Autophagy-related E2-like conjugation enzyme ATG3</fullName>
    </alternativeName>
</protein>
<evidence type="ECO:0000250" key="1"/>
<evidence type="ECO:0000256" key="2">
    <source>
        <dbReference type="SAM" id="MobiDB-lite"/>
    </source>
</evidence>
<evidence type="ECO:0000305" key="3"/>
<sequence>MLRSTLSNWREYLTPISHTSTFETSGQLTPEEFVKAGDYLVHMFPTWKWNGNDFQNVHHKDFLPNDKQFLVTKKVPCKLRANNYLELDDTETKDVGDGWALQEEHSQDSERKSTNNADDSELPEELEELHIVDDGDDEEYDDQLYDNEFADDDIVDIRPSTLRFYDLYITYSTSYRVPKMYLCGYDNDGTPLSPDQMFEDIAADYRSKTATIEPLPFLKGNNISVSIHPCKHANVMKVLMEKVRSSRSRARKVDPQTTDEDWEDLQSDVDDGLRVDQYLVVFLKFITSVTPGIEHDYTMEGW</sequence>
<organism>
    <name type="scientific">Kluyveromyces lactis (strain ATCC 8585 / CBS 2359 / DSM 70799 / NBRC 1267 / NRRL Y-1140 / WM37)</name>
    <name type="common">Yeast</name>
    <name type="synonym">Candida sphaerica</name>
    <dbReference type="NCBI Taxonomy" id="284590"/>
    <lineage>
        <taxon>Eukaryota</taxon>
        <taxon>Fungi</taxon>
        <taxon>Dikarya</taxon>
        <taxon>Ascomycota</taxon>
        <taxon>Saccharomycotina</taxon>
        <taxon>Saccharomycetes</taxon>
        <taxon>Saccharomycetales</taxon>
        <taxon>Saccharomycetaceae</taxon>
        <taxon>Kluyveromyces</taxon>
    </lineage>
</organism>